<sequence>MTSLTRPRVEFISTILQTVLNMGLLSLGLILVVFLGKETVHLADVLFAPEQTSKYELVEGLVVYFLYFEFIALIVKYFQSGFHFPLRYFVYIGITAIVRLIIVDHKSPLDVLIYSAAILLLVITLWLCNSKRLKRE</sequence>
<keyword id="KW-0997">Cell inner membrane</keyword>
<keyword id="KW-1003">Cell membrane</keyword>
<keyword id="KW-0472">Membrane</keyword>
<keyword id="KW-0812">Transmembrane</keyword>
<keyword id="KW-1133">Transmembrane helix</keyword>
<accession>A4W5E5</accession>
<protein>
    <recommendedName>
        <fullName evidence="1">Protein PsiE homolog</fullName>
    </recommendedName>
</protein>
<reference key="1">
    <citation type="journal article" date="2010" name="PLoS Genet.">
        <title>Genome sequence of the plant growth promoting endophytic bacterium Enterobacter sp. 638.</title>
        <authorList>
            <person name="Taghavi S."/>
            <person name="van der Lelie D."/>
            <person name="Hoffman A."/>
            <person name="Zhang Y.B."/>
            <person name="Walla M.D."/>
            <person name="Vangronsveld J."/>
            <person name="Newman L."/>
            <person name="Monchy S."/>
        </authorList>
    </citation>
    <scope>NUCLEOTIDE SEQUENCE [LARGE SCALE GENOMIC DNA]</scope>
    <source>
        <strain>638</strain>
    </source>
</reference>
<gene>
    <name evidence="1" type="primary">psiE</name>
    <name type="ordered locus">Ent638_0235</name>
</gene>
<organism>
    <name type="scientific">Enterobacter sp. (strain 638)</name>
    <dbReference type="NCBI Taxonomy" id="399742"/>
    <lineage>
        <taxon>Bacteria</taxon>
        <taxon>Pseudomonadati</taxon>
        <taxon>Pseudomonadota</taxon>
        <taxon>Gammaproteobacteria</taxon>
        <taxon>Enterobacterales</taxon>
        <taxon>Enterobacteriaceae</taxon>
        <taxon>Enterobacter</taxon>
    </lineage>
</organism>
<feature type="chain" id="PRO_1000064315" description="Protein PsiE homolog">
    <location>
        <begin position="1"/>
        <end position="136"/>
    </location>
</feature>
<feature type="transmembrane region" description="Helical" evidence="1">
    <location>
        <begin position="15"/>
        <end position="35"/>
    </location>
</feature>
<feature type="transmembrane region" description="Helical" evidence="1">
    <location>
        <begin position="55"/>
        <end position="75"/>
    </location>
</feature>
<feature type="transmembrane region" description="Helical" evidence="1">
    <location>
        <begin position="82"/>
        <end position="102"/>
    </location>
</feature>
<feature type="transmembrane region" description="Helical" evidence="1">
    <location>
        <begin position="108"/>
        <end position="128"/>
    </location>
</feature>
<proteinExistence type="inferred from homology"/>
<name>PSIE_ENT38</name>
<evidence type="ECO:0000255" key="1">
    <source>
        <dbReference type="HAMAP-Rule" id="MF_01048"/>
    </source>
</evidence>
<dbReference type="EMBL" id="CP000653">
    <property type="protein sequence ID" value="ABP58925.1"/>
    <property type="molecule type" value="Genomic_DNA"/>
</dbReference>
<dbReference type="RefSeq" id="WP_011915498.1">
    <property type="nucleotide sequence ID" value="NC_009436.1"/>
</dbReference>
<dbReference type="SMR" id="A4W5E5"/>
<dbReference type="STRING" id="399742.Ent638_0235"/>
<dbReference type="GeneID" id="93307418"/>
<dbReference type="KEGG" id="ent:Ent638_0235"/>
<dbReference type="eggNOG" id="COG3223">
    <property type="taxonomic scope" value="Bacteria"/>
</dbReference>
<dbReference type="HOGENOM" id="CLU_127561_0_1_6"/>
<dbReference type="OrthoDB" id="9792470at2"/>
<dbReference type="Proteomes" id="UP000000230">
    <property type="component" value="Chromosome"/>
</dbReference>
<dbReference type="GO" id="GO:0005886">
    <property type="term" value="C:plasma membrane"/>
    <property type="evidence" value="ECO:0007669"/>
    <property type="project" value="UniProtKB-SubCell"/>
</dbReference>
<dbReference type="GO" id="GO:0016036">
    <property type="term" value="P:cellular response to phosphate starvation"/>
    <property type="evidence" value="ECO:0007669"/>
    <property type="project" value="InterPro"/>
</dbReference>
<dbReference type="HAMAP" id="MF_01048">
    <property type="entry name" value="PsiE"/>
    <property type="match status" value="1"/>
</dbReference>
<dbReference type="InterPro" id="IPR009315">
    <property type="entry name" value="P_starv_induced_PsiE"/>
</dbReference>
<dbReference type="InterPro" id="IPR020948">
    <property type="entry name" value="P_starv_induced_PsiE-like"/>
</dbReference>
<dbReference type="NCBIfam" id="NF002764">
    <property type="entry name" value="PRK02833.1-2"/>
    <property type="match status" value="1"/>
</dbReference>
<dbReference type="NCBIfam" id="NF002765">
    <property type="entry name" value="PRK02833.1-3"/>
    <property type="match status" value="1"/>
</dbReference>
<dbReference type="NCBIfam" id="NF002767">
    <property type="entry name" value="PRK02833.1-5"/>
    <property type="match status" value="1"/>
</dbReference>
<dbReference type="PANTHER" id="PTHR37819">
    <property type="entry name" value="PROTEIN PSIE"/>
    <property type="match status" value="1"/>
</dbReference>
<dbReference type="PANTHER" id="PTHR37819:SF1">
    <property type="entry name" value="PROTEIN PSIE"/>
    <property type="match status" value="1"/>
</dbReference>
<dbReference type="Pfam" id="PF06146">
    <property type="entry name" value="PsiE"/>
    <property type="match status" value="1"/>
</dbReference>
<dbReference type="PIRSF" id="PIRSF029598">
    <property type="entry name" value="PsiE"/>
    <property type="match status" value="1"/>
</dbReference>
<comment type="subcellular location">
    <subcellularLocation>
        <location evidence="1">Cell inner membrane</location>
        <topology evidence="1">Multi-pass membrane protein</topology>
    </subcellularLocation>
</comment>
<comment type="similarity">
    <text evidence="1">Belongs to the PsiE family.</text>
</comment>